<gene>
    <name evidence="1" type="primary">pepT</name>
    <name type="ordered locus">YpAngola_A2858</name>
</gene>
<name>PEPT_YERPG</name>
<reference key="1">
    <citation type="journal article" date="2010" name="J. Bacteriol.">
        <title>Genome sequence of the deep-rooted Yersinia pestis strain Angola reveals new insights into the evolution and pangenome of the plague bacterium.</title>
        <authorList>
            <person name="Eppinger M."/>
            <person name="Worsham P.L."/>
            <person name="Nikolich M.P."/>
            <person name="Riley D.R."/>
            <person name="Sebastian Y."/>
            <person name="Mou S."/>
            <person name="Achtman M."/>
            <person name="Lindler L.E."/>
            <person name="Ravel J."/>
        </authorList>
    </citation>
    <scope>NUCLEOTIDE SEQUENCE [LARGE SCALE GENOMIC DNA]</scope>
    <source>
        <strain>Angola</strain>
    </source>
</reference>
<accession>A9R0M2</accession>
<protein>
    <recommendedName>
        <fullName evidence="1">Peptidase T</fullName>
        <ecNumber evidence="1">3.4.11.4</ecNumber>
    </recommendedName>
    <alternativeName>
        <fullName evidence="1">Aminotripeptidase</fullName>
        <shortName evidence="1">Tripeptidase</shortName>
    </alternativeName>
    <alternativeName>
        <fullName evidence="1">Tripeptide aminopeptidase</fullName>
    </alternativeName>
</protein>
<sequence>MDKLLDRFFNYVSFDTQAKANVKSVPSTQGQRKLAQALQQELLTLGFSHVTLSDHGCVMATLPANVSWPVPTIGFIAHLDTSPDFSGKNVNPQIVENYRGGDIALGIGDEVLSPVMFPVLHQLLGHTLITTDGKTLLGADDKAGIAEIITAMVRLKHRNVPHGDIRIAFTPDEEVGKGAQFFNVAEFDAQWAYTVDGGGIGELEFENFNAASVAIKIVGNNVHPGSAKGVMVNALSLATRYHQELPVDETPECTEGYDGFYHLQSIKGTVERAEMHYIVRDFNRDSFEARKKNMVDIAKRVGKGLHRDCYIEIVIDDSYYNMREQIIKHPHIIELAQQAMLDCDITPIMKPIRGGTDGAQLSFKGLPCPNIFTGGYNYHGKHEFITLEGMEKAVAVIMRISELTAKRAKES</sequence>
<evidence type="ECO:0000255" key="1">
    <source>
        <dbReference type="HAMAP-Rule" id="MF_00550"/>
    </source>
</evidence>
<proteinExistence type="inferred from homology"/>
<comment type="function">
    <text evidence="1">Cleaves the N-terminal amino acid of tripeptides.</text>
</comment>
<comment type="catalytic activity">
    <reaction evidence="1">
        <text>Release of the N-terminal residue from a tripeptide.</text>
        <dbReference type="EC" id="3.4.11.4"/>
    </reaction>
</comment>
<comment type="cofactor">
    <cofactor evidence="1">
        <name>Zn(2+)</name>
        <dbReference type="ChEBI" id="CHEBI:29105"/>
    </cofactor>
    <text evidence="1">Binds 2 Zn(2+) ions per subunit.</text>
</comment>
<comment type="subcellular location">
    <subcellularLocation>
        <location evidence="1">Cytoplasm</location>
    </subcellularLocation>
</comment>
<comment type="similarity">
    <text evidence="1">Belongs to the peptidase M20B family.</text>
</comment>
<organism>
    <name type="scientific">Yersinia pestis bv. Antiqua (strain Angola)</name>
    <dbReference type="NCBI Taxonomy" id="349746"/>
    <lineage>
        <taxon>Bacteria</taxon>
        <taxon>Pseudomonadati</taxon>
        <taxon>Pseudomonadota</taxon>
        <taxon>Gammaproteobacteria</taxon>
        <taxon>Enterobacterales</taxon>
        <taxon>Yersiniaceae</taxon>
        <taxon>Yersinia</taxon>
    </lineage>
</organism>
<dbReference type="EC" id="3.4.11.4" evidence="1"/>
<dbReference type="EMBL" id="CP000901">
    <property type="protein sequence ID" value="ABX87062.1"/>
    <property type="molecule type" value="Genomic_DNA"/>
</dbReference>
<dbReference type="RefSeq" id="WP_002210920.1">
    <property type="nucleotide sequence ID" value="NZ_CP009935.1"/>
</dbReference>
<dbReference type="SMR" id="A9R0M2"/>
<dbReference type="MEROPS" id="M20.003"/>
<dbReference type="GeneID" id="57976942"/>
<dbReference type="KEGG" id="ypg:YpAngola_A2858"/>
<dbReference type="PATRIC" id="fig|349746.12.peg.3896"/>
<dbReference type="GO" id="GO:0005829">
    <property type="term" value="C:cytosol"/>
    <property type="evidence" value="ECO:0007669"/>
    <property type="project" value="TreeGrafter"/>
</dbReference>
<dbReference type="GO" id="GO:0008237">
    <property type="term" value="F:metallopeptidase activity"/>
    <property type="evidence" value="ECO:0007669"/>
    <property type="project" value="UniProtKB-KW"/>
</dbReference>
<dbReference type="GO" id="GO:0045148">
    <property type="term" value="F:tripeptide aminopeptidase activity"/>
    <property type="evidence" value="ECO:0007669"/>
    <property type="project" value="UniProtKB-UniRule"/>
</dbReference>
<dbReference type="GO" id="GO:0008270">
    <property type="term" value="F:zinc ion binding"/>
    <property type="evidence" value="ECO:0007669"/>
    <property type="project" value="UniProtKB-UniRule"/>
</dbReference>
<dbReference type="GO" id="GO:0043171">
    <property type="term" value="P:peptide catabolic process"/>
    <property type="evidence" value="ECO:0007669"/>
    <property type="project" value="UniProtKB-UniRule"/>
</dbReference>
<dbReference type="GO" id="GO:0006508">
    <property type="term" value="P:proteolysis"/>
    <property type="evidence" value="ECO:0007669"/>
    <property type="project" value="UniProtKB-UniRule"/>
</dbReference>
<dbReference type="CDD" id="cd03892">
    <property type="entry name" value="M20_peptT"/>
    <property type="match status" value="1"/>
</dbReference>
<dbReference type="FunFam" id="3.30.70.360:FF:000002">
    <property type="entry name" value="Peptidase T"/>
    <property type="match status" value="1"/>
</dbReference>
<dbReference type="Gene3D" id="3.30.70.360">
    <property type="match status" value="1"/>
</dbReference>
<dbReference type="Gene3D" id="3.40.630.10">
    <property type="entry name" value="Zn peptidases"/>
    <property type="match status" value="1"/>
</dbReference>
<dbReference type="HAMAP" id="MF_00550">
    <property type="entry name" value="Aminopeptidase_M20"/>
    <property type="match status" value="1"/>
</dbReference>
<dbReference type="InterPro" id="IPR001261">
    <property type="entry name" value="ArgE/DapE_CS"/>
</dbReference>
<dbReference type="InterPro" id="IPR036264">
    <property type="entry name" value="Bact_exopeptidase_dim_dom"/>
</dbReference>
<dbReference type="InterPro" id="IPR002933">
    <property type="entry name" value="Peptidase_M20"/>
</dbReference>
<dbReference type="InterPro" id="IPR011650">
    <property type="entry name" value="Peptidase_M20_dimer"/>
</dbReference>
<dbReference type="InterPro" id="IPR010161">
    <property type="entry name" value="Peptidase_M20B"/>
</dbReference>
<dbReference type="NCBIfam" id="TIGR01882">
    <property type="entry name" value="peptidase-T"/>
    <property type="match status" value="1"/>
</dbReference>
<dbReference type="NCBIfam" id="NF003976">
    <property type="entry name" value="PRK05469.1"/>
    <property type="match status" value="1"/>
</dbReference>
<dbReference type="NCBIfam" id="NF009920">
    <property type="entry name" value="PRK13381.1"/>
    <property type="match status" value="1"/>
</dbReference>
<dbReference type="PANTHER" id="PTHR42994">
    <property type="entry name" value="PEPTIDASE T"/>
    <property type="match status" value="1"/>
</dbReference>
<dbReference type="PANTHER" id="PTHR42994:SF1">
    <property type="entry name" value="PEPTIDASE T"/>
    <property type="match status" value="1"/>
</dbReference>
<dbReference type="Pfam" id="PF07687">
    <property type="entry name" value="M20_dimer"/>
    <property type="match status" value="1"/>
</dbReference>
<dbReference type="Pfam" id="PF01546">
    <property type="entry name" value="Peptidase_M20"/>
    <property type="match status" value="1"/>
</dbReference>
<dbReference type="PIRSF" id="PIRSF037215">
    <property type="entry name" value="Peptidase_M20B"/>
    <property type="match status" value="1"/>
</dbReference>
<dbReference type="SUPFAM" id="SSF55031">
    <property type="entry name" value="Bacterial exopeptidase dimerisation domain"/>
    <property type="match status" value="1"/>
</dbReference>
<dbReference type="SUPFAM" id="SSF53187">
    <property type="entry name" value="Zn-dependent exopeptidases"/>
    <property type="match status" value="1"/>
</dbReference>
<dbReference type="PROSITE" id="PS00758">
    <property type="entry name" value="ARGE_DAPE_CPG2_1"/>
    <property type="match status" value="1"/>
</dbReference>
<dbReference type="PROSITE" id="PS00759">
    <property type="entry name" value="ARGE_DAPE_CPG2_2"/>
    <property type="match status" value="1"/>
</dbReference>
<keyword id="KW-0031">Aminopeptidase</keyword>
<keyword id="KW-0963">Cytoplasm</keyword>
<keyword id="KW-0378">Hydrolase</keyword>
<keyword id="KW-0479">Metal-binding</keyword>
<keyword id="KW-0482">Metalloprotease</keyword>
<keyword id="KW-0645">Protease</keyword>
<keyword id="KW-0862">Zinc</keyword>
<feature type="chain" id="PRO_1000129060" description="Peptidase T">
    <location>
        <begin position="1"/>
        <end position="411"/>
    </location>
</feature>
<feature type="active site" evidence="1">
    <location>
        <position position="80"/>
    </location>
</feature>
<feature type="active site" description="Proton acceptor" evidence="1">
    <location>
        <position position="173"/>
    </location>
</feature>
<feature type="binding site" evidence="1">
    <location>
        <position position="78"/>
    </location>
    <ligand>
        <name>Zn(2+)</name>
        <dbReference type="ChEBI" id="CHEBI:29105"/>
        <label>1</label>
    </ligand>
</feature>
<feature type="binding site" evidence="1">
    <location>
        <position position="140"/>
    </location>
    <ligand>
        <name>Zn(2+)</name>
        <dbReference type="ChEBI" id="CHEBI:29105"/>
        <label>1</label>
    </ligand>
</feature>
<feature type="binding site" evidence="1">
    <location>
        <position position="140"/>
    </location>
    <ligand>
        <name>Zn(2+)</name>
        <dbReference type="ChEBI" id="CHEBI:29105"/>
        <label>2</label>
    </ligand>
</feature>
<feature type="binding site" evidence="1">
    <location>
        <position position="174"/>
    </location>
    <ligand>
        <name>Zn(2+)</name>
        <dbReference type="ChEBI" id="CHEBI:29105"/>
        <label>2</label>
    </ligand>
</feature>
<feature type="binding site" evidence="1">
    <location>
        <position position="196"/>
    </location>
    <ligand>
        <name>Zn(2+)</name>
        <dbReference type="ChEBI" id="CHEBI:29105"/>
        <label>1</label>
    </ligand>
</feature>
<feature type="binding site" evidence="1">
    <location>
        <position position="379"/>
    </location>
    <ligand>
        <name>Zn(2+)</name>
        <dbReference type="ChEBI" id="CHEBI:29105"/>
        <label>2</label>
    </ligand>
</feature>